<name>RPIA_ENTCL</name>
<accession>Q8RLY6</accession>
<organism>
    <name type="scientific">Enterobacter cloacae</name>
    <dbReference type="NCBI Taxonomy" id="550"/>
    <lineage>
        <taxon>Bacteria</taxon>
        <taxon>Pseudomonadati</taxon>
        <taxon>Pseudomonadota</taxon>
        <taxon>Gammaproteobacteria</taxon>
        <taxon>Enterobacterales</taxon>
        <taxon>Enterobacteriaceae</taxon>
        <taxon>Enterobacter</taxon>
        <taxon>Enterobacter cloacae complex</taxon>
    </lineage>
</organism>
<dbReference type="EC" id="5.3.1.6" evidence="1"/>
<dbReference type="EMBL" id="AY063490">
    <property type="protein sequence ID" value="AAL38664.1"/>
    <property type="molecule type" value="Genomic_DNA"/>
</dbReference>
<dbReference type="RefSeq" id="WP_014885151.1">
    <property type="nucleotide sequence ID" value="NZ_FKGE01000026.1"/>
</dbReference>
<dbReference type="SMR" id="Q8RLY6"/>
<dbReference type="GeneID" id="97446926"/>
<dbReference type="eggNOG" id="COG0120">
    <property type="taxonomic scope" value="Bacteria"/>
</dbReference>
<dbReference type="UniPathway" id="UPA00115">
    <property type="reaction ID" value="UER00412"/>
</dbReference>
<dbReference type="GO" id="GO:0005829">
    <property type="term" value="C:cytosol"/>
    <property type="evidence" value="ECO:0007669"/>
    <property type="project" value="TreeGrafter"/>
</dbReference>
<dbReference type="GO" id="GO:0004751">
    <property type="term" value="F:ribose-5-phosphate isomerase activity"/>
    <property type="evidence" value="ECO:0007669"/>
    <property type="project" value="UniProtKB-UniRule"/>
</dbReference>
<dbReference type="GO" id="GO:0006014">
    <property type="term" value="P:D-ribose metabolic process"/>
    <property type="evidence" value="ECO:0007669"/>
    <property type="project" value="TreeGrafter"/>
</dbReference>
<dbReference type="GO" id="GO:0009052">
    <property type="term" value="P:pentose-phosphate shunt, non-oxidative branch"/>
    <property type="evidence" value="ECO:0007669"/>
    <property type="project" value="UniProtKB-UniRule"/>
</dbReference>
<dbReference type="CDD" id="cd01398">
    <property type="entry name" value="RPI_A"/>
    <property type="match status" value="1"/>
</dbReference>
<dbReference type="FunFam" id="3.30.70.260:FF:000004">
    <property type="entry name" value="Ribose-5-phosphate isomerase A"/>
    <property type="match status" value="1"/>
</dbReference>
<dbReference type="FunFam" id="3.40.50.1360:FF:000001">
    <property type="entry name" value="Ribose-5-phosphate isomerase A"/>
    <property type="match status" value="1"/>
</dbReference>
<dbReference type="Gene3D" id="3.30.70.260">
    <property type="match status" value="1"/>
</dbReference>
<dbReference type="Gene3D" id="3.40.50.1360">
    <property type="match status" value="1"/>
</dbReference>
<dbReference type="HAMAP" id="MF_00170">
    <property type="entry name" value="Rib_5P_isom_A"/>
    <property type="match status" value="1"/>
</dbReference>
<dbReference type="InterPro" id="IPR037171">
    <property type="entry name" value="NagB/RpiA_transferase-like"/>
</dbReference>
<dbReference type="InterPro" id="IPR020672">
    <property type="entry name" value="Ribose5P_isomerase_typA_subgr"/>
</dbReference>
<dbReference type="InterPro" id="IPR004788">
    <property type="entry name" value="Ribose5P_isomerase_type_A"/>
</dbReference>
<dbReference type="NCBIfam" id="NF001924">
    <property type="entry name" value="PRK00702.1"/>
    <property type="match status" value="1"/>
</dbReference>
<dbReference type="NCBIfam" id="TIGR00021">
    <property type="entry name" value="rpiA"/>
    <property type="match status" value="1"/>
</dbReference>
<dbReference type="PANTHER" id="PTHR11934">
    <property type="entry name" value="RIBOSE-5-PHOSPHATE ISOMERASE"/>
    <property type="match status" value="1"/>
</dbReference>
<dbReference type="PANTHER" id="PTHR11934:SF0">
    <property type="entry name" value="RIBOSE-5-PHOSPHATE ISOMERASE"/>
    <property type="match status" value="1"/>
</dbReference>
<dbReference type="Pfam" id="PF06026">
    <property type="entry name" value="Rib_5-P_isom_A"/>
    <property type="match status" value="1"/>
</dbReference>
<dbReference type="SUPFAM" id="SSF75445">
    <property type="entry name" value="D-ribose-5-phosphate isomerase (RpiA), lid domain"/>
    <property type="match status" value="1"/>
</dbReference>
<dbReference type="SUPFAM" id="SSF100950">
    <property type="entry name" value="NagB/RpiA/CoA transferase-like"/>
    <property type="match status" value="1"/>
</dbReference>
<reference key="1">
    <citation type="journal article" date="2002" name="Mol. Plant Microbe Interact.">
        <title>Mutation of rpiA in Enterobacter cloacae decreases seed and root colonization and biocontrol of damping-off caused by Pythium ultimum on cucumber.</title>
        <authorList>
            <person name="Lohrke S.M."/>
            <person name="Dery P.D."/>
            <person name="Li W."/>
            <person name="Reedy R."/>
            <person name="Kobayashi D.Y."/>
            <person name="Roberts D.R."/>
        </authorList>
    </citation>
    <scope>NUCLEOTIDE SEQUENCE [GENOMIC DNA]</scope>
</reference>
<comment type="function">
    <text evidence="1">Catalyzes the reversible conversion of ribose-5-phosphate to ribulose 5-phosphate.</text>
</comment>
<comment type="catalytic activity">
    <reaction evidence="1">
        <text>aldehydo-D-ribose 5-phosphate = D-ribulose 5-phosphate</text>
        <dbReference type="Rhea" id="RHEA:14657"/>
        <dbReference type="ChEBI" id="CHEBI:58121"/>
        <dbReference type="ChEBI" id="CHEBI:58273"/>
        <dbReference type="EC" id="5.3.1.6"/>
    </reaction>
</comment>
<comment type="pathway">
    <text evidence="1">Carbohydrate degradation; pentose phosphate pathway; D-ribose 5-phosphate from D-ribulose 5-phosphate (non-oxidative stage): step 1/1.</text>
</comment>
<comment type="subunit">
    <text evidence="1">Homodimer.</text>
</comment>
<comment type="similarity">
    <text evidence="1">Belongs to the ribose 5-phosphate isomerase family.</text>
</comment>
<evidence type="ECO:0000255" key="1">
    <source>
        <dbReference type="HAMAP-Rule" id="MF_00170"/>
    </source>
</evidence>
<gene>
    <name evidence="1" type="primary">rpiA</name>
</gene>
<keyword id="KW-0413">Isomerase</keyword>
<sequence length="219" mass="22777">MTQDELKKAVGWAALQYVQPGTIVGVGTGSTAAHFIDALGTMKGQIEGAVSSSDASTEKLKSLGITVFDLNEVDRLGIYVDGADEINGHMQMIKGGGAALTREKIIASVADKFICIADASKQVDILGNFPLPVEVIPMARSAVARQLVKLGGRPEYRQGVVTDNGNVILDVHGLEILDAIALENAINAIPGVVTVGLFANRGADVALIGTADGVKTIVK</sequence>
<protein>
    <recommendedName>
        <fullName evidence="1">Ribose-5-phosphate isomerase A</fullName>
        <ecNumber evidence="1">5.3.1.6</ecNumber>
    </recommendedName>
    <alternativeName>
        <fullName evidence="1">Phosphoriboisomerase A</fullName>
        <shortName evidence="1">PRI</shortName>
    </alternativeName>
</protein>
<feature type="chain" id="PRO_0000158416" description="Ribose-5-phosphate isomerase A">
    <location>
        <begin position="1"/>
        <end position="219"/>
    </location>
</feature>
<feature type="active site" description="Proton acceptor" evidence="1">
    <location>
        <position position="103"/>
    </location>
</feature>
<feature type="binding site" evidence="1">
    <location>
        <begin position="28"/>
        <end position="31"/>
    </location>
    <ligand>
        <name>substrate</name>
    </ligand>
</feature>
<feature type="binding site" evidence="1">
    <location>
        <begin position="81"/>
        <end position="84"/>
    </location>
    <ligand>
        <name>substrate</name>
    </ligand>
</feature>
<feature type="binding site" evidence="1">
    <location>
        <begin position="94"/>
        <end position="97"/>
    </location>
    <ligand>
        <name>substrate</name>
    </ligand>
</feature>
<feature type="binding site" evidence="1">
    <location>
        <position position="121"/>
    </location>
    <ligand>
        <name>substrate</name>
    </ligand>
</feature>
<proteinExistence type="inferred from homology"/>